<keyword id="KW-0903">Direct protein sequencing</keyword>
<keyword id="KW-1015">Disulfide bond</keyword>
<keyword id="KW-0964">Secreted</keyword>
<reference key="1">
    <citation type="journal article" date="2016" name="Biochimie">
        <title>Characterization of a novel snake venom component: Kazal-type inhibitor-like protein from the arboreal pitviper Bothriechis schlegelii.</title>
        <authorList>
            <person name="Fernandez J."/>
            <person name="Gutierrez J.M."/>
            <person name="Calvete J.J."/>
            <person name="Sanz L."/>
            <person name="Lomonte B."/>
        </authorList>
    </citation>
    <scope>NUCLEOTIDE SEQUENCE [MRNA]</scope>
    <scope>PROTEIN SEQUENCE OF 1-39</scope>
    <scope>FUNCTION</scope>
    <scope>SUBUNIT</scope>
    <scope>SUBCELLULAR LOCATION</scope>
    <scope>MASS SPECTROMETRY</scope>
    <source>
        <tissue evidence="3">Venom</tissue>
        <tissue evidence="3">Venom gland</tissue>
    </source>
</reference>
<protein>
    <recommendedName>
        <fullName evidence="3">Kazal-type inhibitor-like protein</fullName>
        <shortName evidence="3">KTIL</shortName>
    </recommendedName>
</protein>
<proteinExistence type="evidence at protein level"/>
<comment type="function">
    <text evidence="2">Partially inhibits trypsin in vitro at slightly acidic pH and concentrations in excess of 0.3 mM. Has no protease inhibitory activity at neutral or basic pH. Has no antibacterial activity. Shows no toxicity in vertebrates apart from transient paw edema in mouse.</text>
</comment>
<comment type="subunit">
    <text evidence="4">May form disulfide-linked dimers or trimers (in vitro).</text>
</comment>
<comment type="subcellular location">
    <subcellularLocation>
        <location evidence="2">Secreted</location>
    </subcellularLocation>
</comment>
<comment type="tissue specificity">
    <text evidence="2">Expressed by the venom gland.</text>
</comment>
<comment type="mass spectrometry" mass="6171.0" error="2.0" method="MALDI" evidence="2"/>
<evidence type="ECO:0000255" key="1">
    <source>
        <dbReference type="PROSITE-ProRule" id="PRU00798"/>
    </source>
</evidence>
<evidence type="ECO:0000269" key="2">
    <source>
    </source>
</evidence>
<evidence type="ECO:0000303" key="3">
    <source>
    </source>
</evidence>
<evidence type="ECO:0000305" key="4">
    <source>
    </source>
</evidence>
<organism evidence="3">
    <name type="scientific">Bothriechis schlegelii</name>
    <name type="common">Eyelash palm pitviper</name>
    <dbReference type="NCBI Taxonomy" id="44725"/>
    <lineage>
        <taxon>Eukaryota</taxon>
        <taxon>Metazoa</taxon>
        <taxon>Chordata</taxon>
        <taxon>Craniata</taxon>
        <taxon>Vertebrata</taxon>
        <taxon>Euteleostomi</taxon>
        <taxon>Lepidosauria</taxon>
        <taxon>Squamata</taxon>
        <taxon>Bifurcata</taxon>
        <taxon>Unidentata</taxon>
        <taxon>Episquamata</taxon>
        <taxon>Toxicofera</taxon>
        <taxon>Serpentes</taxon>
        <taxon>Colubroidea</taxon>
        <taxon>Viperidae</taxon>
        <taxon>Crotalinae</taxon>
        <taxon>Bothriechis</taxon>
    </lineage>
</organism>
<sequence length="54" mass="6179">MKVNCKGYPTKFCFGKPLPHCASDGKTYPNRCRFCNAFVKSHGLITLRYYGKCK</sequence>
<feature type="chain" id="PRO_0000443430" description="Kazal-type inhibitor-like protein" evidence="2">
    <location>
        <begin position="1"/>
        <end position="54"/>
    </location>
</feature>
<feature type="domain" description="Kazal-like" evidence="1">
    <location>
        <begin position="1"/>
        <end position="54"/>
    </location>
</feature>
<feature type="site" description="Reactive bond" evidence="1">
    <location>
        <begin position="15"/>
        <end position="16"/>
    </location>
</feature>
<feature type="disulfide bond" evidence="1">
    <location>
        <begin position="5"/>
        <end position="35"/>
    </location>
</feature>
<feature type="disulfide bond" evidence="1">
    <location>
        <begin position="13"/>
        <end position="32"/>
    </location>
</feature>
<feature type="disulfide bond" evidence="1">
    <location>
        <begin position="21"/>
        <end position="53"/>
    </location>
</feature>
<dbReference type="SMR" id="C0HL51"/>
<dbReference type="GO" id="GO:0005576">
    <property type="term" value="C:extracellular region"/>
    <property type="evidence" value="ECO:0007669"/>
    <property type="project" value="UniProtKB-SubCell"/>
</dbReference>
<dbReference type="CDD" id="cd00104">
    <property type="entry name" value="KAZAL_FS"/>
    <property type="match status" value="1"/>
</dbReference>
<dbReference type="FunFam" id="3.30.60.30:FF:000037">
    <property type="entry name" value="Ovomucoid"/>
    <property type="match status" value="1"/>
</dbReference>
<dbReference type="Gene3D" id="3.30.60.30">
    <property type="match status" value="1"/>
</dbReference>
<dbReference type="InterPro" id="IPR050159">
    <property type="entry name" value="Kazal-type_SerProtInhib"/>
</dbReference>
<dbReference type="InterPro" id="IPR002350">
    <property type="entry name" value="Kazal_dom"/>
</dbReference>
<dbReference type="InterPro" id="IPR036058">
    <property type="entry name" value="Kazal_dom_sf"/>
</dbReference>
<dbReference type="PANTHER" id="PTHR47499:SF1">
    <property type="entry name" value="SERINE PROTEASE INHIBITOR KAZAL-TYPE 7"/>
    <property type="match status" value="1"/>
</dbReference>
<dbReference type="PANTHER" id="PTHR47499">
    <property type="entry name" value="SERINE PROTEASE INHIBITOR KAZAL-TYPE 7 SPINK7"/>
    <property type="match status" value="1"/>
</dbReference>
<dbReference type="Pfam" id="PF00050">
    <property type="entry name" value="Kazal_1"/>
    <property type="match status" value="1"/>
</dbReference>
<dbReference type="SMART" id="SM00280">
    <property type="entry name" value="KAZAL"/>
    <property type="match status" value="1"/>
</dbReference>
<dbReference type="SUPFAM" id="SSF100895">
    <property type="entry name" value="Kazal-type serine protease inhibitors"/>
    <property type="match status" value="1"/>
</dbReference>
<dbReference type="PROSITE" id="PS00282">
    <property type="entry name" value="KAZAL_1"/>
    <property type="match status" value="1"/>
</dbReference>
<dbReference type="PROSITE" id="PS51465">
    <property type="entry name" value="KAZAL_2"/>
    <property type="match status" value="1"/>
</dbReference>
<name>KTIL_BOTSC</name>
<accession>C0HL51</accession>